<gene>
    <name type="primary">Smyd2</name>
</gene>
<reference key="1">
    <citation type="journal article" date="2003" name="BMC Genomics">
        <title>Gene discovery in the hamster: a comparative genomics approach for gene annotation by sequencing of hamster testis cDNAs.</title>
        <authorList>
            <person name="Oduru S."/>
            <person name="Campbell J.L."/>
            <person name="Karri S."/>
            <person name="Hendry W.J."/>
            <person name="Khan S.A."/>
            <person name="Williams S.C."/>
        </authorList>
    </citation>
    <scope>NUCLEOTIDE SEQUENCE [MRNA]</scope>
</reference>
<reference key="2">
    <citation type="journal article" date="2012" name="Nat. Commun.">
        <title>Quantitative maps of protein phosphorylation sites across 14 different rat organs and tissues.</title>
        <authorList>
            <person name="Lundby A."/>
            <person name="Secher A."/>
            <person name="Lage K."/>
            <person name="Nordsborg N.B."/>
            <person name="Dmytriyev A."/>
            <person name="Lundby C."/>
            <person name="Olsen J.V."/>
        </authorList>
    </citation>
    <scope>PHOSPHORYLATION [LARGE SCALE ANALYSIS] AT SER-283</scope>
    <scope>IDENTIFICATION BY MASS SPECTROMETRY [LARGE SCALE ANALYSIS]</scope>
</reference>
<feature type="chain" id="PRO_0000218311" description="N-lysine methyltransferase SMYD2">
    <location>
        <begin position="1"/>
        <end position="433"/>
    </location>
</feature>
<feature type="domain" description="SET" evidence="4">
    <location>
        <begin position="7"/>
        <end position="241"/>
    </location>
</feature>
<feature type="zinc finger region" description="MYND-type" evidence="3">
    <location>
        <begin position="52"/>
        <end position="90"/>
    </location>
</feature>
<feature type="binding site" evidence="1">
    <location>
        <begin position="17"/>
        <end position="19"/>
    </location>
    <ligand>
        <name>S-adenosyl-L-methionine</name>
        <dbReference type="ChEBI" id="CHEBI:59789"/>
    </ligand>
</feature>
<feature type="binding site" evidence="3">
    <location>
        <position position="52"/>
    </location>
    <ligand>
        <name>Zn(2+)</name>
        <dbReference type="ChEBI" id="CHEBI:29105"/>
        <label>1</label>
    </ligand>
</feature>
<feature type="binding site" evidence="3">
    <location>
        <position position="55"/>
    </location>
    <ligand>
        <name>Zn(2+)</name>
        <dbReference type="ChEBI" id="CHEBI:29105"/>
        <label>1</label>
    </ligand>
</feature>
<feature type="binding site" evidence="3">
    <location>
        <position position="65"/>
    </location>
    <ligand>
        <name>Zn(2+)</name>
        <dbReference type="ChEBI" id="CHEBI:29105"/>
        <label>2</label>
    </ligand>
</feature>
<feature type="binding site" evidence="3">
    <location>
        <position position="68"/>
    </location>
    <ligand>
        <name>Zn(2+)</name>
        <dbReference type="ChEBI" id="CHEBI:29105"/>
        <label>2</label>
    </ligand>
</feature>
<feature type="binding site" evidence="3">
    <location>
        <position position="74"/>
    </location>
    <ligand>
        <name>Zn(2+)</name>
        <dbReference type="ChEBI" id="CHEBI:29105"/>
        <label>1</label>
    </ligand>
</feature>
<feature type="binding site" evidence="3">
    <location>
        <position position="78"/>
    </location>
    <ligand>
        <name>Zn(2+)</name>
        <dbReference type="ChEBI" id="CHEBI:29105"/>
        <label>1</label>
    </ligand>
</feature>
<feature type="binding site" evidence="3">
    <location>
        <position position="86"/>
    </location>
    <ligand>
        <name>Zn(2+)</name>
        <dbReference type="ChEBI" id="CHEBI:29105"/>
        <label>2</label>
    </ligand>
</feature>
<feature type="binding site" evidence="3">
    <location>
        <position position="90"/>
    </location>
    <ligand>
        <name>Zn(2+)</name>
        <dbReference type="ChEBI" id="CHEBI:29105"/>
        <label>2</label>
    </ligand>
</feature>
<feature type="binding site" evidence="4">
    <location>
        <position position="137"/>
    </location>
    <ligand>
        <name>S-adenosyl-L-methionine</name>
        <dbReference type="ChEBI" id="CHEBI:59789"/>
    </ligand>
</feature>
<feature type="binding site" evidence="1">
    <location>
        <begin position="206"/>
        <end position="207"/>
    </location>
    <ligand>
        <name>S-adenosyl-L-methionine</name>
        <dbReference type="ChEBI" id="CHEBI:59789"/>
    </ligand>
</feature>
<feature type="binding site" evidence="1">
    <location>
        <begin position="258"/>
        <end position="260"/>
    </location>
    <ligand>
        <name>S-adenosyl-L-methionine</name>
        <dbReference type="ChEBI" id="CHEBI:59789"/>
    </ligand>
</feature>
<feature type="modified residue" description="Phosphoserine" evidence="5">
    <location>
        <position position="283"/>
    </location>
</feature>
<organism>
    <name type="scientific">Rattus norvegicus</name>
    <name type="common">Rat</name>
    <dbReference type="NCBI Taxonomy" id="10116"/>
    <lineage>
        <taxon>Eukaryota</taxon>
        <taxon>Metazoa</taxon>
        <taxon>Chordata</taxon>
        <taxon>Craniata</taxon>
        <taxon>Vertebrata</taxon>
        <taxon>Euteleostomi</taxon>
        <taxon>Mammalia</taxon>
        <taxon>Eutheria</taxon>
        <taxon>Euarchontoglires</taxon>
        <taxon>Glires</taxon>
        <taxon>Rodentia</taxon>
        <taxon>Myomorpha</taxon>
        <taxon>Muroidea</taxon>
        <taxon>Muridae</taxon>
        <taxon>Murinae</taxon>
        <taxon>Rattus</taxon>
    </lineage>
</organism>
<proteinExistence type="evidence at protein level"/>
<keyword id="KW-0156">Chromatin regulator</keyword>
<keyword id="KW-0963">Cytoplasm</keyword>
<keyword id="KW-0479">Metal-binding</keyword>
<keyword id="KW-0489">Methyltransferase</keyword>
<keyword id="KW-0539">Nucleus</keyword>
<keyword id="KW-0597">Phosphoprotein</keyword>
<keyword id="KW-1185">Reference proteome</keyword>
<keyword id="KW-0949">S-adenosyl-L-methionine</keyword>
<keyword id="KW-0804">Transcription</keyword>
<keyword id="KW-0805">Transcription regulation</keyword>
<keyword id="KW-0808">Transferase</keyword>
<keyword id="KW-0862">Zinc</keyword>
<keyword id="KW-0863">Zinc-finger</keyword>
<comment type="function">
    <text evidence="2">Protein-lysine N-methyltransferase that methylates both histones and non-histone proteins, including p53/TP53 and RB1. Specifically trimethylates histone H3 'Lys-4' (H3K4me3) in vivo. The activity requires interaction with HSP90alpha. Shows even higher methyltransferase activity on p53/TP53. Monomethylates 'Lys-370' of p53/TP53, leading to decreased DNA-binding activity and subsequent transcriptional regulation activity of p53/TP53. Monomethylates RB1 at 'Lys-860'.</text>
</comment>
<comment type="catalytic activity">
    <reaction evidence="2">
        <text>L-lysyl(4)-[histone H3] + 3 S-adenosyl-L-methionine = N(6),N(6),N(6)-trimethyl-L-lysyl(4)-[histone H3] + 3 S-adenosyl-L-homocysteine + 3 H(+)</text>
        <dbReference type="Rhea" id="RHEA:60260"/>
        <dbReference type="Rhea" id="RHEA-COMP:15537"/>
        <dbReference type="Rhea" id="RHEA-COMP:15547"/>
        <dbReference type="ChEBI" id="CHEBI:15378"/>
        <dbReference type="ChEBI" id="CHEBI:29969"/>
        <dbReference type="ChEBI" id="CHEBI:57856"/>
        <dbReference type="ChEBI" id="CHEBI:59789"/>
        <dbReference type="ChEBI" id="CHEBI:61961"/>
        <dbReference type="EC" id="2.1.1.354"/>
    </reaction>
</comment>
<comment type="catalytic activity">
    <reaction evidence="2">
        <text>L-lysyl-[protein] + S-adenosyl-L-methionine = N(6)-methyl-L-lysyl-[protein] + S-adenosyl-L-homocysteine + H(+)</text>
        <dbReference type="Rhea" id="RHEA:51736"/>
        <dbReference type="Rhea" id="RHEA-COMP:9752"/>
        <dbReference type="Rhea" id="RHEA-COMP:13053"/>
        <dbReference type="ChEBI" id="CHEBI:15378"/>
        <dbReference type="ChEBI" id="CHEBI:29969"/>
        <dbReference type="ChEBI" id="CHEBI:57856"/>
        <dbReference type="ChEBI" id="CHEBI:59789"/>
        <dbReference type="ChEBI" id="CHEBI:61929"/>
    </reaction>
</comment>
<comment type="subunit">
    <text evidence="1">Interacts with RNA polymerase II and HELZ. Interacts with SIN3A and HDAC1. Interacts (via MYND-type zinc finger) with EPB41L3. Interacts (via SET domain) with p53/TP53. Interacts with RB1 and HSP90AA1 (By similarity).</text>
</comment>
<comment type="subcellular location">
    <subcellularLocation>
        <location evidence="1">Cytoplasm</location>
        <location evidence="1">Cytosol</location>
    </subcellularLocation>
    <subcellularLocation>
        <location evidence="1">Nucleus</location>
    </subcellularLocation>
</comment>
<comment type="similarity">
    <text evidence="4">Belongs to the class V-like SAM-binding methyltransferase superfamily.</text>
</comment>
<name>SMYD2_RAT</name>
<sequence>MRAEARGGLERFCSAGKGRGLRALRPFHVGDLLFSCPAYACVLTVGERGHHCECCFARKEGLSKCGRCKQAFYCDVECQKEDWPLHKLECSSMVVFGENWNPSETVRLTARILAKQKMHPERTPSEKLLAVREFESHLDKLDNEKKDLIQSDIAALHQFYSKHLEFPDHSSLVVLFAQVNCNGFTIEDEELSHLGSAIFPDVALMNHSCCPNVIVTYKGTLAEVRAVQEIHPGDEVFTSYIDLLYPTEDRNDRLRDSYFFTCECRECTTKDKDKAKVEIRKLSNPPQAEAIRDMVRYARNVIEEFRRAKHYKSPSELLEICELSQEKMSSVFEDSNVYMLHMMYQAMGVCLYMQDWEGALKYGQKIIKPYSKHYPVYSLNVASMWLKLGRLYMGLENKAAGEKALKKAIAIMEIAHGKDHPYISEIKQEIESH</sequence>
<evidence type="ECO:0000250" key="1"/>
<evidence type="ECO:0000250" key="2">
    <source>
        <dbReference type="UniProtKB" id="Q9NRG4"/>
    </source>
</evidence>
<evidence type="ECO:0000255" key="3">
    <source>
        <dbReference type="PROSITE-ProRule" id="PRU00134"/>
    </source>
</evidence>
<evidence type="ECO:0000255" key="4">
    <source>
        <dbReference type="PROSITE-ProRule" id="PRU00190"/>
    </source>
</evidence>
<evidence type="ECO:0007744" key="5">
    <source>
    </source>
</evidence>
<dbReference type="EC" id="2.1.1.-" evidence="2"/>
<dbReference type="EC" id="2.1.1.354" evidence="2"/>
<dbReference type="EMBL" id="BK001057">
    <property type="protein sequence ID" value="DAA01315.1"/>
    <property type="molecule type" value="mRNA"/>
</dbReference>
<dbReference type="RefSeq" id="NP_996733.1">
    <property type="nucleotide sequence ID" value="NM_206851.1"/>
</dbReference>
<dbReference type="SMR" id="Q7M6Z3"/>
<dbReference type="FunCoup" id="Q7M6Z3">
    <property type="interactions" value="271"/>
</dbReference>
<dbReference type="STRING" id="10116.ENSRNOP00000004783"/>
<dbReference type="iPTMnet" id="Q7M6Z3"/>
<dbReference type="PhosphoSitePlus" id="Q7M6Z3"/>
<dbReference type="jPOST" id="Q7M6Z3"/>
<dbReference type="PaxDb" id="10116-ENSRNOP00000004783"/>
<dbReference type="Ensembl" id="ENSRNOT00000004783.7">
    <property type="protein sequence ID" value="ENSRNOP00000004783.4"/>
    <property type="gene ID" value="ENSRNOG00000003583.7"/>
</dbReference>
<dbReference type="GeneID" id="289372"/>
<dbReference type="KEGG" id="rno:289372"/>
<dbReference type="AGR" id="RGD:727785"/>
<dbReference type="CTD" id="56950"/>
<dbReference type="RGD" id="727785">
    <property type="gene designation" value="Smyd2"/>
</dbReference>
<dbReference type="eggNOG" id="KOG2084">
    <property type="taxonomic scope" value="Eukaryota"/>
</dbReference>
<dbReference type="GeneTree" id="ENSGT00940000157082"/>
<dbReference type="HOGENOM" id="CLU_018406_0_0_1"/>
<dbReference type="InParanoid" id="Q7M6Z3"/>
<dbReference type="OMA" id="HRIMDYL"/>
<dbReference type="OrthoDB" id="12051at9989"/>
<dbReference type="PhylomeDB" id="Q7M6Z3"/>
<dbReference type="TreeFam" id="TF106487"/>
<dbReference type="Reactome" id="R-RNO-3214841">
    <property type="pathway name" value="PKMTs methylate histone lysines"/>
</dbReference>
<dbReference type="Reactome" id="R-RNO-6804760">
    <property type="pathway name" value="Regulation of TP53 Activity through Methylation"/>
</dbReference>
<dbReference type="PRO" id="PR:Q7M6Z3"/>
<dbReference type="Proteomes" id="UP000002494">
    <property type="component" value="Chromosome 13"/>
</dbReference>
<dbReference type="Bgee" id="ENSRNOG00000003583">
    <property type="expression patterns" value="Expressed in skeletal muscle tissue and 20 other cell types or tissues"/>
</dbReference>
<dbReference type="GO" id="GO:0005737">
    <property type="term" value="C:cytoplasm"/>
    <property type="evidence" value="ECO:0000250"/>
    <property type="project" value="UniProtKB"/>
</dbReference>
<dbReference type="GO" id="GO:0005829">
    <property type="term" value="C:cytosol"/>
    <property type="evidence" value="ECO:0000250"/>
    <property type="project" value="UniProtKB"/>
</dbReference>
<dbReference type="GO" id="GO:0005634">
    <property type="term" value="C:nucleus"/>
    <property type="evidence" value="ECO:0000250"/>
    <property type="project" value="UniProtKB"/>
</dbReference>
<dbReference type="GO" id="GO:0046975">
    <property type="term" value="F:histone H3K36 methyltransferase activity"/>
    <property type="evidence" value="ECO:0000250"/>
    <property type="project" value="UniProtKB"/>
</dbReference>
<dbReference type="GO" id="GO:0140999">
    <property type="term" value="F:histone H3K4 trimethyltransferase activity"/>
    <property type="evidence" value="ECO:0007669"/>
    <property type="project" value="UniProtKB-EC"/>
</dbReference>
<dbReference type="GO" id="GO:0002039">
    <property type="term" value="F:p53 binding"/>
    <property type="evidence" value="ECO:0000266"/>
    <property type="project" value="RGD"/>
</dbReference>
<dbReference type="GO" id="GO:0016279">
    <property type="term" value="F:protein-lysine N-methyltransferase activity"/>
    <property type="evidence" value="ECO:0000250"/>
    <property type="project" value="UniProtKB"/>
</dbReference>
<dbReference type="GO" id="GO:0000993">
    <property type="term" value="F:RNA polymerase II complex binding"/>
    <property type="evidence" value="ECO:0000250"/>
    <property type="project" value="UniProtKB"/>
</dbReference>
<dbReference type="GO" id="GO:0008270">
    <property type="term" value="F:zinc ion binding"/>
    <property type="evidence" value="ECO:0007669"/>
    <property type="project" value="UniProtKB-KW"/>
</dbReference>
<dbReference type="GO" id="GO:0007507">
    <property type="term" value="P:heart development"/>
    <property type="evidence" value="ECO:0000270"/>
    <property type="project" value="RGD"/>
</dbReference>
<dbReference type="GO" id="GO:0008285">
    <property type="term" value="P:negative regulation of cell population proliferation"/>
    <property type="evidence" value="ECO:0000250"/>
    <property type="project" value="UniProtKB"/>
</dbReference>
<dbReference type="GO" id="GO:0000122">
    <property type="term" value="P:negative regulation of transcription by RNA polymerase II"/>
    <property type="evidence" value="ECO:0000250"/>
    <property type="project" value="UniProtKB"/>
</dbReference>
<dbReference type="GO" id="GO:0018027">
    <property type="term" value="P:peptidyl-lysine dimethylation"/>
    <property type="evidence" value="ECO:0000250"/>
    <property type="project" value="UniProtKB"/>
</dbReference>
<dbReference type="GO" id="GO:0018026">
    <property type="term" value="P:peptidyl-lysine monomethylation"/>
    <property type="evidence" value="ECO:0000250"/>
    <property type="project" value="UniProtKB"/>
</dbReference>
<dbReference type="GO" id="GO:0043516">
    <property type="term" value="P:regulation of DNA damage response, signal transduction by p53 class mediator"/>
    <property type="evidence" value="ECO:0000250"/>
    <property type="project" value="UniProtKB"/>
</dbReference>
<dbReference type="CDD" id="cd19202">
    <property type="entry name" value="SET_SMYD2"/>
    <property type="match status" value="1"/>
</dbReference>
<dbReference type="FunFam" id="2.170.270.10:FF:000013">
    <property type="entry name" value="Histone-lysine N-methyltransferase SMYD1 isoform 1"/>
    <property type="match status" value="1"/>
</dbReference>
<dbReference type="FunFam" id="1.10.220.160:FF:000001">
    <property type="entry name" value="N-lysine methyltransferase SMYD2 isoform X1"/>
    <property type="match status" value="1"/>
</dbReference>
<dbReference type="FunFam" id="6.10.140.2220:FF:000013">
    <property type="entry name" value="N-lysine methyltransferase SMYD2 isoform X1"/>
    <property type="match status" value="1"/>
</dbReference>
<dbReference type="FunFam" id="1.25.40.10:FF:000249">
    <property type="entry name" value="N-lysine methyltransferase SMYD2 isoform X2"/>
    <property type="match status" value="1"/>
</dbReference>
<dbReference type="Gene3D" id="1.10.220.160">
    <property type="match status" value="1"/>
</dbReference>
<dbReference type="Gene3D" id="6.10.140.2220">
    <property type="match status" value="1"/>
</dbReference>
<dbReference type="Gene3D" id="2.170.270.10">
    <property type="entry name" value="SET domain"/>
    <property type="match status" value="1"/>
</dbReference>
<dbReference type="Gene3D" id="1.25.40.10">
    <property type="entry name" value="Tetratricopeptide repeat domain"/>
    <property type="match status" value="1"/>
</dbReference>
<dbReference type="InterPro" id="IPR050869">
    <property type="entry name" value="H3K4_H4K5_MeTrfase"/>
</dbReference>
<dbReference type="InterPro" id="IPR001214">
    <property type="entry name" value="SET_dom"/>
</dbReference>
<dbReference type="InterPro" id="IPR046341">
    <property type="entry name" value="SET_dom_sf"/>
</dbReference>
<dbReference type="InterPro" id="IPR044419">
    <property type="entry name" value="SMYD2_SET"/>
</dbReference>
<dbReference type="InterPro" id="IPR011990">
    <property type="entry name" value="TPR-like_helical_dom_sf"/>
</dbReference>
<dbReference type="InterPro" id="IPR002893">
    <property type="entry name" value="Znf_MYND"/>
</dbReference>
<dbReference type="PANTHER" id="PTHR12197">
    <property type="entry name" value="HISTONE-LYSINE N-METHYLTRANSFERASE SMYD"/>
    <property type="match status" value="1"/>
</dbReference>
<dbReference type="PANTHER" id="PTHR12197:SF193">
    <property type="entry name" value="N-LYSINE METHYLTRANSFERASE SMYD2"/>
    <property type="match status" value="1"/>
</dbReference>
<dbReference type="Pfam" id="PF00856">
    <property type="entry name" value="SET"/>
    <property type="match status" value="1"/>
</dbReference>
<dbReference type="Pfam" id="PF01753">
    <property type="entry name" value="zf-MYND"/>
    <property type="match status" value="1"/>
</dbReference>
<dbReference type="SUPFAM" id="SSF82199">
    <property type="entry name" value="SET domain"/>
    <property type="match status" value="1"/>
</dbReference>
<dbReference type="SUPFAM" id="SSF48452">
    <property type="entry name" value="TPR-like"/>
    <property type="match status" value="1"/>
</dbReference>
<dbReference type="PROSITE" id="PS50280">
    <property type="entry name" value="SET"/>
    <property type="match status" value="1"/>
</dbReference>
<dbReference type="PROSITE" id="PS01360">
    <property type="entry name" value="ZF_MYND_1"/>
    <property type="match status" value="1"/>
</dbReference>
<dbReference type="PROSITE" id="PS50865">
    <property type="entry name" value="ZF_MYND_2"/>
    <property type="match status" value="1"/>
</dbReference>
<protein>
    <recommendedName>
        <fullName>N-lysine methyltransferase SMYD2</fullName>
        <ecNumber evidence="2">2.1.1.-</ecNumber>
    </recommendedName>
    <alternativeName>
        <fullName>Histone methyltransferase SMYD2</fullName>
        <ecNumber evidence="2">2.1.1.354</ecNumber>
    </alternativeName>
    <alternativeName>
        <fullName>SET and MYND domain-containing protein 2</fullName>
    </alternativeName>
</protein>
<accession>Q7M6Z3</accession>